<reference key="1">
    <citation type="submission" date="2006-11" db="EMBL/GenBank/DDBJ databases">
        <title>Sequence of Campylobacter fetus subsp. fetus 82-40.</title>
        <authorList>
            <person name="Fouts D.E."/>
            <person name="Nelson K.E."/>
        </authorList>
    </citation>
    <scope>NUCLEOTIDE SEQUENCE [LARGE SCALE GENOMIC DNA]</scope>
    <source>
        <strain>82-40</strain>
    </source>
</reference>
<proteinExistence type="inferred from homology"/>
<evidence type="ECO:0000255" key="1">
    <source>
        <dbReference type="HAMAP-Rule" id="MF_00445"/>
    </source>
</evidence>
<organism>
    <name type="scientific">Campylobacter fetus subsp. fetus (strain 82-40)</name>
    <dbReference type="NCBI Taxonomy" id="360106"/>
    <lineage>
        <taxon>Bacteria</taxon>
        <taxon>Pseudomonadati</taxon>
        <taxon>Campylobacterota</taxon>
        <taxon>Epsilonproteobacteria</taxon>
        <taxon>Campylobacterales</taxon>
        <taxon>Campylobacteraceae</taxon>
        <taxon>Campylobacter</taxon>
    </lineage>
</organism>
<name>NUON_CAMFF</name>
<comment type="function">
    <text evidence="1">NDH-1 shuttles electrons from NADH, via FMN and iron-sulfur (Fe-S) centers, to quinones in the respiratory chain. The immediate electron acceptor for the enzyme in this species is believed to be ubiquinone. Couples the redox reaction to proton translocation (for every two electrons transferred, four hydrogen ions are translocated across the cytoplasmic membrane), and thus conserves the redox energy in a proton gradient.</text>
</comment>
<comment type="catalytic activity">
    <reaction evidence="1">
        <text>a quinone + NADH + 5 H(+)(in) = a quinol + NAD(+) + 4 H(+)(out)</text>
        <dbReference type="Rhea" id="RHEA:57888"/>
        <dbReference type="ChEBI" id="CHEBI:15378"/>
        <dbReference type="ChEBI" id="CHEBI:24646"/>
        <dbReference type="ChEBI" id="CHEBI:57540"/>
        <dbReference type="ChEBI" id="CHEBI:57945"/>
        <dbReference type="ChEBI" id="CHEBI:132124"/>
    </reaction>
</comment>
<comment type="subunit">
    <text evidence="1">NDH-1 is composed of 14 different subunits. Subunits NuoA, H, J, K, L, M, N constitute the membrane sector of the complex.</text>
</comment>
<comment type="subcellular location">
    <subcellularLocation>
        <location evidence="1">Cell inner membrane</location>
        <topology evidence="1">Multi-pass membrane protein</topology>
    </subcellularLocation>
</comment>
<comment type="similarity">
    <text evidence="1">Belongs to the complex I subunit 2 family.</text>
</comment>
<feature type="chain" id="PRO_0000391119" description="NADH-quinone oxidoreductase subunit N">
    <location>
        <begin position="1"/>
        <end position="469"/>
    </location>
</feature>
<feature type="transmembrane region" description="Helical" evidence="1">
    <location>
        <begin position="2"/>
        <end position="22"/>
    </location>
</feature>
<feature type="transmembrane region" description="Helical" evidence="1">
    <location>
        <begin position="28"/>
        <end position="48"/>
    </location>
</feature>
<feature type="transmembrane region" description="Helical" evidence="1">
    <location>
        <begin position="70"/>
        <end position="90"/>
    </location>
</feature>
<feature type="transmembrane region" description="Helical" evidence="1">
    <location>
        <begin position="101"/>
        <end position="121"/>
    </location>
</feature>
<feature type="transmembrane region" description="Helical" evidence="1">
    <location>
        <begin position="122"/>
        <end position="142"/>
    </location>
</feature>
<feature type="transmembrane region" description="Helical" evidence="1">
    <location>
        <begin position="157"/>
        <end position="177"/>
    </location>
</feature>
<feature type="transmembrane region" description="Helical" evidence="1">
    <location>
        <begin position="194"/>
        <end position="214"/>
    </location>
</feature>
<feature type="transmembrane region" description="Helical" evidence="1">
    <location>
        <begin position="233"/>
        <end position="253"/>
    </location>
</feature>
<feature type="transmembrane region" description="Helical" evidence="1">
    <location>
        <begin position="261"/>
        <end position="281"/>
    </location>
</feature>
<feature type="transmembrane region" description="Helical" evidence="1">
    <location>
        <begin position="290"/>
        <end position="310"/>
    </location>
</feature>
<feature type="transmembrane region" description="Helical" evidence="1">
    <location>
        <begin position="315"/>
        <end position="335"/>
    </location>
</feature>
<feature type="transmembrane region" description="Helical" evidence="1">
    <location>
        <begin position="361"/>
        <end position="381"/>
    </location>
</feature>
<feature type="transmembrane region" description="Helical" evidence="1">
    <location>
        <begin position="398"/>
        <end position="418"/>
    </location>
</feature>
<feature type="transmembrane region" description="Helical" evidence="1">
    <location>
        <begin position="447"/>
        <end position="467"/>
    </location>
</feature>
<accession>A0RME1</accession>
<gene>
    <name evidence="1" type="primary">nuoN</name>
    <name type="ordered locus">CFF8240_0169</name>
</gene>
<dbReference type="EC" id="7.1.1.-" evidence="1"/>
<dbReference type="EMBL" id="CP000487">
    <property type="protein sequence ID" value="ABK82541.1"/>
    <property type="molecule type" value="Genomic_DNA"/>
</dbReference>
<dbReference type="RefSeq" id="WP_011731721.1">
    <property type="nucleotide sequence ID" value="NC_008599.1"/>
</dbReference>
<dbReference type="SMR" id="A0RME1"/>
<dbReference type="GeneID" id="61064014"/>
<dbReference type="KEGG" id="cff:CFF8240_0169"/>
<dbReference type="PATRIC" id="fig|360106.6.peg.166"/>
<dbReference type="eggNOG" id="COG1007">
    <property type="taxonomic scope" value="Bacteria"/>
</dbReference>
<dbReference type="HOGENOM" id="CLU_007100_1_5_7"/>
<dbReference type="Proteomes" id="UP000000760">
    <property type="component" value="Chromosome"/>
</dbReference>
<dbReference type="GO" id="GO:0005886">
    <property type="term" value="C:plasma membrane"/>
    <property type="evidence" value="ECO:0007669"/>
    <property type="project" value="UniProtKB-SubCell"/>
</dbReference>
<dbReference type="GO" id="GO:0008137">
    <property type="term" value="F:NADH dehydrogenase (ubiquinone) activity"/>
    <property type="evidence" value="ECO:0007669"/>
    <property type="project" value="InterPro"/>
</dbReference>
<dbReference type="GO" id="GO:0050136">
    <property type="term" value="F:NADH:ubiquinone reductase (non-electrogenic) activity"/>
    <property type="evidence" value="ECO:0007669"/>
    <property type="project" value="UniProtKB-UniRule"/>
</dbReference>
<dbReference type="GO" id="GO:0048038">
    <property type="term" value="F:quinone binding"/>
    <property type="evidence" value="ECO:0007669"/>
    <property type="project" value="UniProtKB-KW"/>
</dbReference>
<dbReference type="GO" id="GO:0042773">
    <property type="term" value="P:ATP synthesis coupled electron transport"/>
    <property type="evidence" value="ECO:0007669"/>
    <property type="project" value="InterPro"/>
</dbReference>
<dbReference type="HAMAP" id="MF_00445">
    <property type="entry name" value="NDH1_NuoN_1"/>
    <property type="match status" value="1"/>
</dbReference>
<dbReference type="InterPro" id="IPR010096">
    <property type="entry name" value="NADH-Q_OxRdtase_suN/2"/>
</dbReference>
<dbReference type="InterPro" id="IPR001750">
    <property type="entry name" value="ND/Mrp_TM"/>
</dbReference>
<dbReference type="PANTHER" id="PTHR22773">
    <property type="entry name" value="NADH DEHYDROGENASE"/>
    <property type="match status" value="1"/>
</dbReference>
<dbReference type="Pfam" id="PF00361">
    <property type="entry name" value="Proton_antipo_M"/>
    <property type="match status" value="1"/>
</dbReference>
<keyword id="KW-0997">Cell inner membrane</keyword>
<keyword id="KW-1003">Cell membrane</keyword>
<keyword id="KW-0472">Membrane</keyword>
<keyword id="KW-0520">NAD</keyword>
<keyword id="KW-0874">Quinone</keyword>
<keyword id="KW-1278">Translocase</keyword>
<keyword id="KW-0812">Transmembrane</keyword>
<keyword id="KW-1133">Transmembrane helix</keyword>
<keyword id="KW-0813">Transport</keyword>
<keyword id="KW-0830">Ubiquinone</keyword>
<sequence length="469" mass="52082">MIALLPFILSLAATFINIFLCVTNISKRYSINLNILFWVIIFISFFIVRSNFSNDFLMDFATPFISLDEFSFCFGVVLSALMIIFLISSFYSDDEKFYKQEMFALASLAGFGLLAMSLSVELILTLIFLEVASISIYAMIAMNSIEYKSVEAAFKYFLLSSFMSAFYLLGAAFVFGVAGSTKYSFIATGLNSDFLSIIGMILVLSMMFFKIAIFGFYRWSIDVYYGSNLNIAGFLASAFKLASFAILIKLCFLYPGNNIEILQGIFAILAILSMFAGNLLSLKETNVKKILIAAGIVHSGYIFINLSSVGASVSIYPAIFYLSTYTIVVGFLFAILNGLFGDREIKISDLNGLYKVRPTEAFAFTVICLSFIGFPYSVGFLGKLFIFSSAVESGKTYLAIFGIINTIFSVYYYLKIIISIYFSENKTALSCADSKKFGLKLLALSSILFIILEGSGIFSIISFLNLFIR</sequence>
<protein>
    <recommendedName>
        <fullName evidence="1">NADH-quinone oxidoreductase subunit N</fullName>
        <ecNumber evidence="1">7.1.1.-</ecNumber>
    </recommendedName>
    <alternativeName>
        <fullName evidence="1">NADH dehydrogenase I subunit N</fullName>
    </alternativeName>
    <alternativeName>
        <fullName evidence="1">NDH-1 subunit N</fullName>
    </alternativeName>
</protein>